<keyword id="KW-0134">Cell wall</keyword>
<keyword id="KW-0903">Direct protein sequencing</keyword>
<keyword id="KW-0325">Glycoprotein</keyword>
<keyword id="KW-0336">GPI-anchor</keyword>
<keyword id="KW-0449">Lipoprotein</keyword>
<keyword id="KW-0472">Membrane</keyword>
<keyword id="KW-1185">Reference proteome</keyword>
<keyword id="KW-0964">Secreted</keyword>
<keyword id="KW-0732">Signal</keyword>
<gene>
    <name type="primary">CWP1</name>
    <name type="ordered locus">YKL096W</name>
    <name type="ORF">YJU1</name>
    <name type="ORF">YKL443</name>
</gene>
<sequence length="239" mass="24268">MKFSTALSVALFALAKMVIADSEEFGLVSIRSGSDLQYLSVYSDNGTLKLGSGSGSFEATITDDGKLKFDDDKYAVVNEDGSFKEGSESDAATGFSIKDGHLNYKSSSGFYAIKDGSSYIFSSKQSDDATGVAIRPTSKSGSVAADFSPSDSSSSSSASASSASASSSTKHSSSIESVETSTTVETSSASSPTASVISQITDGQIQAPNTVYEQTENAGAKAAVGMGAGALAVAAAYLL</sequence>
<feature type="signal peptide" evidence="9">
    <location>
        <begin position="1"/>
        <end position="20"/>
    </location>
</feature>
<feature type="chain" id="PRO_0000033250" description="Cell wall protein CWP1">
    <location>
        <begin position="21"/>
        <end position="217"/>
    </location>
</feature>
<feature type="propeptide" id="PRO_0000033251" description="Removed in mature form" evidence="2">
    <location>
        <begin position="218"/>
        <end position="239"/>
    </location>
</feature>
<feature type="repeat" description="PIR1/2/3">
    <location>
        <begin position="194"/>
        <end position="212"/>
    </location>
</feature>
<feature type="region of interest" description="Disordered" evidence="3">
    <location>
        <begin position="131"/>
        <end position="196"/>
    </location>
</feature>
<feature type="compositionally biased region" description="Low complexity" evidence="3">
    <location>
        <begin position="142"/>
        <end position="196"/>
    </location>
</feature>
<feature type="site" description="Covalent attachment to cell wall glycan" evidence="1">
    <location>
        <position position="204"/>
    </location>
</feature>
<feature type="lipid moiety-binding region" description="GPI-anchor amidated asparagine" evidence="2">
    <location>
        <position position="217"/>
    </location>
</feature>
<feature type="sequence variant" description="In strain: CLIB 410.">
    <original>IADSEEFGL</original>
    <variation>LPIPKNSAW</variation>
    <location>
        <begin position="19"/>
        <end position="27"/>
    </location>
</feature>
<feature type="sequence conflict" description="In Ref. 2; CAE52173/CAE52175/CAE52179/CAE52180/CAE52181/CAE52182/CAE52183/CAE52185/CAE52186 and 5; CAA46969." evidence="10" ref="2 5">
    <original>A</original>
    <variation>V</variation>
    <location>
        <position position="189"/>
    </location>
</feature>
<organism>
    <name type="scientific">Saccharomyces cerevisiae (strain ATCC 204508 / S288c)</name>
    <name type="common">Baker's yeast</name>
    <dbReference type="NCBI Taxonomy" id="559292"/>
    <lineage>
        <taxon>Eukaryota</taxon>
        <taxon>Fungi</taxon>
        <taxon>Dikarya</taxon>
        <taxon>Ascomycota</taxon>
        <taxon>Saccharomycotina</taxon>
        <taxon>Saccharomycetes</taxon>
        <taxon>Saccharomycetales</taxon>
        <taxon>Saccharomycetaceae</taxon>
        <taxon>Saccharomyces</taxon>
    </lineage>
</organism>
<comment type="function">
    <text>Component of the cell wall.</text>
</comment>
<comment type="subcellular location">
    <subcellularLocation>
        <location>Secreted</location>
        <location>Cell wall</location>
    </subcellularLocation>
    <subcellularLocation>
        <location>Membrane</location>
        <topology>Lipid-anchor</topology>
        <topology>GPI-anchor</topology>
    </subcellularLocation>
    <text>Identified as covalently-linked GPI-modified cell wall protein (GPI-CWP) as well as protein covalently linked via an alkali-sensitive bond not requiring the GPI-derived structure. Can also be double-anchored to the cell wall through both types of linkages. Incorporated into the birth scar of a daughter cell.</text>
</comment>
<comment type="induction">
    <text evidence="4 5 6 7">Positively regulated by cell integrity signaling through MPK1 in response to cell wall perturbation. Induction is dependent on transcription factor RLM1. Down-regulated during anaerobic growth. Up-regulated by low pH.</text>
</comment>
<comment type="PTM">
    <text evidence="9">Extensively O-glycosylated.</text>
</comment>
<comment type="PTM">
    <text>The GPI-anchor is attached to the protein in the endoplasmic reticulum and serves to target the protein to the cell surface. There, the glucosamine-inositol phospholipid moiety is cleaved off and the GPI-modified mannoprotein is covalently attached via its lipidless GPI glycan remnant to the 1,6-beta-glucan of the outer cell wall layer.</text>
</comment>
<comment type="PTM">
    <text evidence="1">Covalently linked to beta-1,3-glucan of the inner cell wall layer via an alkali-sensitive ester linkage between the gamma-carboxyl group of glutamic acids, arising from a specific glutamine within the PIR1/2/3 repeat, and hydroxyl groups of glucoses of beta-1,3-glucan chains (By similarity). The alkali-sensitive linkage is induced by low pH.</text>
</comment>
<comment type="miscellaneous">
    <text>The strains CLIB 410 and CLIB 630 haplotype Ha2, contain large deletions that remove most of the protein.</text>
</comment>
<comment type="miscellaneous">
    <text evidence="8">Present with 67000 wall-bound molecules/cell in log phase YPD medium.</text>
</comment>
<comment type="similarity">
    <text evidence="10">Belongs to the SRP1/TIP1 family.</text>
</comment>
<name>CWP1_YEAST</name>
<proteinExistence type="evidence at protein level"/>
<dbReference type="EMBL" id="D37975">
    <property type="protein sequence ID" value="BAA07193.1"/>
    <property type="molecule type" value="Genomic_DNA"/>
</dbReference>
<dbReference type="EMBL" id="AJ585652">
    <property type="protein sequence ID" value="CAE52172.1"/>
    <property type="molecule type" value="Genomic_DNA"/>
</dbReference>
<dbReference type="EMBL" id="AJ585653">
    <property type="protein sequence ID" value="CAE52173.1"/>
    <property type="molecule type" value="Genomic_DNA"/>
</dbReference>
<dbReference type="EMBL" id="AJ585654">
    <property type="protein sequence ID" value="CAE52174.1"/>
    <property type="molecule type" value="Genomic_DNA"/>
</dbReference>
<dbReference type="EMBL" id="AJ585655">
    <property type="protein sequence ID" value="CAE52175.1"/>
    <property type="molecule type" value="Genomic_DNA"/>
</dbReference>
<dbReference type="EMBL" id="AJ585656">
    <property type="protein sequence ID" value="CAE52176.1"/>
    <property type="molecule type" value="Genomic_DNA"/>
</dbReference>
<dbReference type="EMBL" id="AJ585657">
    <property type="protein sequence ID" value="CAE52177.1"/>
    <property type="molecule type" value="Genomic_DNA"/>
</dbReference>
<dbReference type="EMBL" id="AJ585658">
    <property type="protein sequence ID" value="CAE52178.1"/>
    <property type="molecule type" value="Genomic_DNA"/>
</dbReference>
<dbReference type="EMBL" id="AJ585659">
    <property type="protein sequence ID" value="CAE52179.1"/>
    <property type="molecule type" value="Genomic_DNA"/>
</dbReference>
<dbReference type="EMBL" id="AJ585660">
    <property type="protein sequence ID" value="CAE52180.1"/>
    <property type="molecule type" value="Genomic_DNA"/>
</dbReference>
<dbReference type="EMBL" id="AJ585661">
    <property type="protein sequence ID" value="CAE52181.1"/>
    <property type="molecule type" value="Genomic_DNA"/>
</dbReference>
<dbReference type="EMBL" id="AJ585662">
    <property type="protein sequence ID" value="CAE52182.1"/>
    <property type="molecule type" value="Genomic_DNA"/>
</dbReference>
<dbReference type="EMBL" id="AJ585663">
    <property type="protein sequence ID" value="CAE52183.1"/>
    <property type="molecule type" value="Genomic_DNA"/>
</dbReference>
<dbReference type="EMBL" id="AJ585664">
    <property type="protein sequence ID" value="CAE52184.1"/>
    <property type="molecule type" value="Genomic_DNA"/>
</dbReference>
<dbReference type="EMBL" id="AJ585665">
    <property type="protein sequence ID" value="CAE52185.1"/>
    <property type="molecule type" value="Genomic_DNA"/>
</dbReference>
<dbReference type="EMBL" id="AJ585666">
    <property type="protein sequence ID" value="CAE52186.1"/>
    <property type="molecule type" value="Genomic_DNA"/>
</dbReference>
<dbReference type="EMBL" id="X71133">
    <property type="protein sequence ID" value="CAA50461.1"/>
    <property type="molecule type" value="Genomic_DNA"/>
</dbReference>
<dbReference type="EMBL" id="Z28096">
    <property type="protein sequence ID" value="CAA81934.1"/>
    <property type="molecule type" value="Genomic_DNA"/>
</dbReference>
<dbReference type="EMBL" id="X66245">
    <property type="protein sequence ID" value="CAA46969.1"/>
    <property type="molecule type" value="Genomic_DNA"/>
</dbReference>
<dbReference type="EMBL" id="BK006944">
    <property type="protein sequence ID" value="DAA09062.1"/>
    <property type="molecule type" value="Genomic_DNA"/>
</dbReference>
<dbReference type="PIR" id="S37923">
    <property type="entry name" value="S37923"/>
</dbReference>
<dbReference type="RefSeq" id="NP_012827.1">
    <property type="nucleotide sequence ID" value="NM_001179662.1"/>
</dbReference>
<dbReference type="BioGRID" id="34037">
    <property type="interactions" value="37"/>
</dbReference>
<dbReference type="FunCoup" id="P28319">
    <property type="interactions" value="108"/>
</dbReference>
<dbReference type="IntAct" id="P28319">
    <property type="interactions" value="3"/>
</dbReference>
<dbReference type="STRING" id="4932.YKL096W"/>
<dbReference type="iPTMnet" id="P28319"/>
<dbReference type="PaxDb" id="4932-YKL096W"/>
<dbReference type="PeptideAtlas" id="P28319"/>
<dbReference type="EnsemblFungi" id="YKL096W_mRNA">
    <property type="protein sequence ID" value="YKL096W"/>
    <property type="gene ID" value="YKL096W"/>
</dbReference>
<dbReference type="GeneID" id="853766"/>
<dbReference type="KEGG" id="sce:YKL096W"/>
<dbReference type="AGR" id="SGD:S000001579"/>
<dbReference type="SGD" id="S000001579">
    <property type="gene designation" value="CWP1"/>
</dbReference>
<dbReference type="VEuPathDB" id="FungiDB:YKL096W"/>
<dbReference type="eggNOG" id="ENOG502S09G">
    <property type="taxonomic scope" value="Eukaryota"/>
</dbReference>
<dbReference type="HOGENOM" id="CLU_054077_0_0_1"/>
<dbReference type="InParanoid" id="P28319"/>
<dbReference type="OMA" id="QTITSCE"/>
<dbReference type="OrthoDB" id="5415592at2759"/>
<dbReference type="BioCyc" id="YEAST:G3O-31887-MONOMER"/>
<dbReference type="BioGRID-ORCS" id="853766">
    <property type="hits" value="1 hit in 10 CRISPR screens"/>
</dbReference>
<dbReference type="PRO" id="PR:P28319"/>
<dbReference type="Proteomes" id="UP000002311">
    <property type="component" value="Chromosome XI"/>
</dbReference>
<dbReference type="RNAct" id="P28319">
    <property type="molecule type" value="protein"/>
</dbReference>
<dbReference type="GO" id="GO:0071597">
    <property type="term" value="C:cellular birth scar"/>
    <property type="evidence" value="ECO:0000314"/>
    <property type="project" value="SGD"/>
</dbReference>
<dbReference type="GO" id="GO:0005576">
    <property type="term" value="C:extracellular region"/>
    <property type="evidence" value="ECO:0007669"/>
    <property type="project" value="UniProtKB-KW"/>
</dbReference>
<dbReference type="GO" id="GO:0009277">
    <property type="term" value="C:fungal-type cell wall"/>
    <property type="evidence" value="ECO:0000314"/>
    <property type="project" value="SGD"/>
</dbReference>
<dbReference type="GO" id="GO:0000324">
    <property type="term" value="C:fungal-type vacuole"/>
    <property type="evidence" value="ECO:0007005"/>
    <property type="project" value="SGD"/>
</dbReference>
<dbReference type="GO" id="GO:0005628">
    <property type="term" value="C:prospore membrane"/>
    <property type="evidence" value="ECO:0000314"/>
    <property type="project" value="SGD"/>
</dbReference>
<dbReference type="GO" id="GO:0098552">
    <property type="term" value="C:side of membrane"/>
    <property type="evidence" value="ECO:0007669"/>
    <property type="project" value="UniProtKB-KW"/>
</dbReference>
<dbReference type="GO" id="GO:0005199">
    <property type="term" value="F:structural constituent of cell wall"/>
    <property type="evidence" value="ECO:0000314"/>
    <property type="project" value="SGD"/>
</dbReference>
<dbReference type="GO" id="GO:0032120">
    <property type="term" value="P:ascospore-type prospore membrane formation"/>
    <property type="evidence" value="ECO:0000316"/>
    <property type="project" value="SGD"/>
</dbReference>
<dbReference type="GO" id="GO:0031505">
    <property type="term" value="P:fungal-type cell wall organization"/>
    <property type="evidence" value="ECO:0000314"/>
    <property type="project" value="SGD"/>
</dbReference>
<dbReference type="InterPro" id="IPR000420">
    <property type="entry name" value="Yeast_PIR_rpt"/>
</dbReference>
<dbReference type="Pfam" id="PF00399">
    <property type="entry name" value="PIR"/>
    <property type="match status" value="1"/>
</dbReference>
<dbReference type="PROSITE" id="PS50256">
    <property type="entry name" value="PIR_REPEAT_2"/>
    <property type="match status" value="1"/>
</dbReference>
<reference key="1">
    <citation type="journal article" date="1995" name="J. Biochem.">
        <title>Molecular cloning of CWP1: a gene encoding a Saccharomyces cerevisiae cell wall protein solubilized with Rarobacter faecitabidus protease I.</title>
        <authorList>
            <person name="Shimoi H."/>
            <person name="Iimura Y."/>
            <person name="Obata T."/>
        </authorList>
    </citation>
    <scope>NUCLEOTIDE SEQUENCE [GENOMIC DNA]</scope>
    <scope>PARTIAL PROTEIN SEQUENCE</scope>
    <scope>SUBCELLULAR LOCATION</scope>
    <source>
        <strain>ATCC 26786 / X2180-1A</strain>
    </source>
</reference>
<reference key="2">
    <citation type="journal article" date="2004" name="Nucleic Acids Res.">
        <title>Differential evolution of the Saccharomyces cerevisiae DUP240 paralogs and implication of recombination in phylogeny.</title>
        <authorList>
            <person name="Leh-Louis V."/>
            <person name="Wirth B."/>
            <person name="Despons L."/>
            <person name="Wain-Hobson S."/>
            <person name="Potier S."/>
            <person name="Souciet J.-L."/>
        </authorList>
    </citation>
    <scope>NUCLEOTIDE SEQUENCE [GENOMIC DNA]</scope>
    <source>
        <strain>CLIB 219</strain>
        <strain>CLIB 382</strain>
        <strain>CLIB 388</strain>
        <strain>CLIB 410</strain>
        <strain>CLIB 413</strain>
        <strain>CLIB 556</strain>
        <strain>CLIB 630</strain>
        <strain>CLIB 95</strain>
        <strain>K1</strain>
        <strain>R12</strain>
        <strain>R13</strain>
        <strain>Sigma 1278B</strain>
        <strain>YIIc12</strain>
        <strain>YIIc17</strain>
    </source>
</reference>
<reference key="3">
    <citation type="journal article" date="1993" name="Yeast">
        <title>DNA sequence analysis of a 17 kb fragment of yeast chromosome XI physically localizes the MRB1 gene and reveals eight new open reading frames, including a homologue of the KIN1/KIN2 and SNF1 protein kinases.</title>
        <authorList>
            <person name="Pallier C."/>
            <person name="Valens M."/>
            <person name="Puzos V."/>
            <person name="Fukuhara H."/>
            <person name="Cheret G."/>
            <person name="Sor F."/>
            <person name="Bolotin-Fukuhara M."/>
        </authorList>
    </citation>
    <scope>NUCLEOTIDE SEQUENCE [LARGE SCALE GENOMIC DNA]</scope>
    <source>
        <strain>ATCC 204508 / S288c</strain>
    </source>
</reference>
<reference key="4">
    <citation type="journal article" date="2014" name="G3 (Bethesda)">
        <title>The reference genome sequence of Saccharomyces cerevisiae: Then and now.</title>
        <authorList>
            <person name="Engel S.R."/>
            <person name="Dietrich F.S."/>
            <person name="Fisk D.G."/>
            <person name="Binkley G."/>
            <person name="Balakrishnan R."/>
            <person name="Costanzo M.C."/>
            <person name="Dwight S.S."/>
            <person name="Hitz B.C."/>
            <person name="Karra K."/>
            <person name="Nash R.S."/>
            <person name="Weng S."/>
            <person name="Wong E.D."/>
            <person name="Lloyd P."/>
            <person name="Skrzypek M.S."/>
            <person name="Miyasato S.R."/>
            <person name="Simison M."/>
            <person name="Cherry J.M."/>
        </authorList>
    </citation>
    <scope>GENOME REANNOTATION</scope>
    <source>
        <strain>ATCC 204508 / S288c</strain>
    </source>
</reference>
<reference key="5">
    <citation type="journal article" date="1994" name="Nature">
        <title>Complete DNA sequence of yeast chromosome XI.</title>
        <authorList>
            <person name="Dujon B."/>
            <person name="Alexandraki D."/>
            <person name="Andre B."/>
            <person name="Ansorge W."/>
            <person name="Baladron V."/>
            <person name="Ballesta J.P.G."/>
            <person name="Banrevi A."/>
            <person name="Bolle P.-A."/>
            <person name="Bolotin-Fukuhara M."/>
            <person name="Bossier P."/>
            <person name="Bou G."/>
            <person name="Boyer J."/>
            <person name="Buitrago M.J."/>
            <person name="Cheret G."/>
            <person name="Colleaux L."/>
            <person name="Daignan-Fornier B."/>
            <person name="del Rey F."/>
            <person name="Dion C."/>
            <person name="Domdey H."/>
            <person name="Duesterhoeft A."/>
            <person name="Duesterhus S."/>
            <person name="Entian K.-D."/>
            <person name="Erfle H."/>
            <person name="Esteban P.F."/>
            <person name="Feldmann H."/>
            <person name="Fernandes L."/>
            <person name="Fobo G.M."/>
            <person name="Fritz C."/>
            <person name="Fukuhara H."/>
            <person name="Gabel C."/>
            <person name="Gaillon L."/>
            <person name="Garcia-Cantalejo J.M."/>
            <person name="Garcia-Ramirez J.J."/>
            <person name="Gent M.E."/>
            <person name="Ghazvini M."/>
            <person name="Goffeau A."/>
            <person name="Gonzalez A."/>
            <person name="Grothues D."/>
            <person name="Guerreiro P."/>
            <person name="Hegemann J.H."/>
            <person name="Hewitt N."/>
            <person name="Hilger F."/>
            <person name="Hollenberg C.P."/>
            <person name="Horaitis O."/>
            <person name="Indge K.J."/>
            <person name="Jacquier A."/>
            <person name="James C.M."/>
            <person name="Jauniaux J.-C."/>
            <person name="Jimenez A."/>
            <person name="Keuchel H."/>
            <person name="Kirchrath L."/>
            <person name="Kleine K."/>
            <person name="Koetter P."/>
            <person name="Legrain P."/>
            <person name="Liebl S."/>
            <person name="Louis E.J."/>
            <person name="Maia e Silva A."/>
            <person name="Marck C."/>
            <person name="Monnier A.-L."/>
            <person name="Moestl D."/>
            <person name="Mueller S."/>
            <person name="Obermaier B."/>
            <person name="Oliver S.G."/>
            <person name="Pallier C."/>
            <person name="Pascolo S."/>
            <person name="Pfeiffer F."/>
            <person name="Philippsen P."/>
            <person name="Planta R.J."/>
            <person name="Pohl F.M."/>
            <person name="Pohl T.M."/>
            <person name="Poehlmann R."/>
            <person name="Portetelle D."/>
            <person name="Purnelle B."/>
            <person name="Puzos V."/>
            <person name="Ramezani Rad M."/>
            <person name="Rasmussen S.W."/>
            <person name="Remacha M.A."/>
            <person name="Revuelta J.L."/>
            <person name="Richard G.-F."/>
            <person name="Rieger M."/>
            <person name="Rodrigues-Pousada C."/>
            <person name="Rose M."/>
            <person name="Rupp T."/>
            <person name="Santos M.A."/>
            <person name="Schwager C."/>
            <person name="Sensen C."/>
            <person name="Skala J."/>
            <person name="Soares H."/>
            <person name="Sor F."/>
            <person name="Stegemann J."/>
            <person name="Tettelin H."/>
            <person name="Thierry A."/>
            <person name="Tzermia M."/>
            <person name="Urrestarazu L.A."/>
            <person name="van Dyck L."/>
            <person name="van Vliet-Reedijk J.C."/>
            <person name="Valens M."/>
            <person name="Vandenbol M."/>
            <person name="Vilela C."/>
            <person name="Vissers S."/>
            <person name="von Wettstein D."/>
            <person name="Voss H."/>
            <person name="Wiemann S."/>
            <person name="Xu G."/>
            <person name="Zimmermann J."/>
            <person name="Haasemann M."/>
            <person name="Becker I."/>
            <person name="Mewes H.-W."/>
        </authorList>
    </citation>
    <scope>NUCLEOTIDE SEQUENCE [LARGE SCALE GENOMIC DNA]</scope>
    <source>
        <strain>ATCC 204508 / S288c</strain>
    </source>
</reference>
<reference key="6">
    <citation type="journal article" date="1992" name="Yeast">
        <title>Sequence of the novel essential gene YJU2 and two flanking reading frames located within a 3.2 kb EcoRI fragment from chromosome X of Saccharomyces cerevisiae.</title>
        <authorList>
            <person name="Forrova H."/>
            <person name="Kolarov J."/>
            <person name="Ghislain M."/>
            <person name="Goffeau A."/>
        </authorList>
    </citation>
    <scope>NUCLEOTIDE SEQUENCE [GENOMIC DNA] OF 24-239</scope>
    <source>
        <strain>ATCC 204508 / S288c</strain>
    </source>
</reference>
<reference key="7">
    <citation type="journal article" date="1995" name="J. Bacteriol.">
        <title>Identification of three mannoproteins in the cell wall of Saccharomyces cerevisiae.</title>
        <authorList>
            <person name="van der Vaart J.M."/>
            <person name="Caro L.H.P."/>
            <person name="Chapman J.W."/>
            <person name="Klis F.M."/>
            <person name="Verrips C.T."/>
        </authorList>
    </citation>
    <scope>PROTEIN SEQUENCE OF 21-30</scope>
    <scope>GLYCOSYLATION</scope>
    <scope>SUBCELLULAR LOCATION</scope>
</reference>
<reference key="8">
    <citation type="journal article" date="1996" name="Glycobiology">
        <title>Retention of Saccharomyces cerevisiae cell wall proteins through a phosphodiester-linked beta-1,3-/beta-1,6-glucan heteropolymer.</title>
        <authorList>
            <person name="Kapteyn J.C."/>
            <person name="Montijn R.C."/>
            <person name="Vink E."/>
            <person name="de la Cruz J."/>
            <person name="Llobell A."/>
            <person name="Douwes J.E."/>
            <person name="Shimoi H."/>
            <person name="Lipke P.N."/>
            <person name="Klis F.M."/>
        </authorList>
    </citation>
    <scope>SUBCELLULAR LOCATION</scope>
</reference>
<reference key="9">
    <citation type="journal article" date="1999" name="Mol. Microbiol.">
        <title>The contribution of the O-glycosylated protein Pir2p/Hsp150 to the construction of the yeast cell wall in wild-type cells and beta 1,6-glucan-deficient mutants.</title>
        <authorList>
            <person name="Kapteyn J.C."/>
            <person name="Van Egmond P."/>
            <person name="Sievi E."/>
            <person name="Van Den Ende H."/>
            <person name="Makarow M."/>
            <person name="Klis F.M."/>
        </authorList>
    </citation>
    <scope>SUBCELLULAR LOCATION</scope>
</reference>
<reference key="10">
    <citation type="journal article" date="1999" name="Mol. Microbiol.">
        <title>Genome-wide analysis of gene expression regulated by the yeast cell wall integrity signalling pathway.</title>
        <authorList>
            <person name="Jung U.S."/>
            <person name="Levin D.E."/>
        </authorList>
    </citation>
    <scope>INDUCTION</scope>
</reference>
<reference key="11">
    <citation type="journal article" date="2000" name="Mol. Gen. Genet.">
        <title>Up-regulation of genes encoding glycosylphosphatidylinositol (GPI)-attached proteins in response to cell wall damage caused by disruption of FKS1 in Saccharomyces cerevisiae.</title>
        <authorList>
            <person name="Terashima H."/>
            <person name="Yabuki N."/>
            <person name="Arisawa M."/>
            <person name="Hamada K."/>
            <person name="Kitada K."/>
        </authorList>
    </citation>
    <scope>INDUCTION</scope>
    <scope>SUBCELLULAR LOCATION</scope>
</reference>
<reference key="12">
    <citation type="journal article" date="2001" name="J. Bacteriol.">
        <title>Reciprocal regulation of anaerobic and aerobic cell wall mannoprotein gene expression in Saccharomyces cerevisiae.</title>
        <authorList>
            <person name="Abramova N.E."/>
            <person name="Sertil O."/>
            <person name="Mehta S."/>
            <person name="Lowry C.V."/>
        </authorList>
    </citation>
    <scope>INDUCTION</scope>
</reference>
<reference key="13">
    <citation type="journal article" date="2001" name="Mol. Microbiol.">
        <title>Low external pH induces HOG1-dependent changes in the organization of the Saccharomyces cerevisiae cell wall.</title>
        <authorList>
            <person name="Kapteyn J.C."/>
            <person name="ter Riet B."/>
            <person name="Vink E."/>
            <person name="Blad S."/>
            <person name="De Nobel H."/>
            <person name="Van Den Ende H."/>
            <person name="Klis F.M."/>
        </authorList>
    </citation>
    <scope>SUBCELLULAR LOCATION</scope>
    <scope>INDUCTION</scope>
</reference>
<reference key="14">
    <citation type="journal article" date="2005" name="J. Biol. Chem.">
        <title>Comprehensive proteomic analysis of Saccharomyces cerevisiae cell walls: identification of proteins covalently attached via glycosylphosphatidylinositol remnants or mild alkali-sensitive linkages.</title>
        <authorList>
            <person name="Yin Q.Y."/>
            <person name="de Groot P.W.J."/>
            <person name="Dekker H.L."/>
            <person name="de Jong L."/>
            <person name="Klis F.M."/>
            <person name="de Koster C.G."/>
        </authorList>
    </citation>
    <scope>SUBCELLULAR LOCATION</scope>
    <scope>IDENTIFICATION BY MASS SPECTROMETRY</scope>
    <scope>GPI-ANCHOR</scope>
</reference>
<reference key="15">
    <citation type="journal article" date="2006" name="Mol. Biol. Cell">
        <title>Role of cell cycle-regulated expression in the localized incorporation of cell wall proteins in yeast.</title>
        <authorList>
            <person name="Smits G.J."/>
            <person name="Schenkman L.R."/>
            <person name="Brul S."/>
            <person name="Pringle J.R."/>
            <person name="Klis F.M."/>
        </authorList>
    </citation>
    <scope>SUBCELLULAR LOCATION</scope>
</reference>
<reference key="16">
    <citation type="journal article" date="2007" name="FEMS Yeast Res.">
        <title>Mass spectrometric quantitation of covalently bound cell wall proteins in Saccharomyces cerevisiae.</title>
        <authorList>
            <person name="Yin Q.Y."/>
            <person name="de Groot P.W.J."/>
            <person name="de Jong L."/>
            <person name="Klis F.M."/>
            <person name="de Koster C.G."/>
        </authorList>
    </citation>
    <scope>LEVEL OF PROTEIN EXPRESSION</scope>
    <scope>IDENTIFICATION BY MASS SPECTROMETRY</scope>
</reference>
<protein>
    <recommendedName>
        <fullName>Cell wall protein CWP1</fullName>
    </recommendedName>
    <alternativeName>
        <fullName>Glycoprotein GP40</fullName>
    </alternativeName>
</protein>
<accession>P28319</accession>
<accession>D6VXJ2</accession>
<accession>Q70DB4</accession>
<accession>Q70DB5</accession>
<evidence type="ECO:0000250" key="1"/>
<evidence type="ECO:0000255" key="2"/>
<evidence type="ECO:0000256" key="3">
    <source>
        <dbReference type="SAM" id="MobiDB-lite"/>
    </source>
</evidence>
<evidence type="ECO:0000269" key="4">
    <source>
    </source>
</evidence>
<evidence type="ECO:0000269" key="5">
    <source>
    </source>
</evidence>
<evidence type="ECO:0000269" key="6">
    <source>
    </source>
</evidence>
<evidence type="ECO:0000269" key="7">
    <source>
    </source>
</evidence>
<evidence type="ECO:0000269" key="8">
    <source>
    </source>
</evidence>
<evidence type="ECO:0000269" key="9">
    <source>
    </source>
</evidence>
<evidence type="ECO:0000305" key="10"/>